<dbReference type="EMBL" id="U12386">
    <property type="protein sequence ID" value="AAD11848.1"/>
    <property type="molecule type" value="Genomic_DNA"/>
</dbReference>
<dbReference type="PIR" id="S53856">
    <property type="entry name" value="S53856"/>
</dbReference>
<dbReference type="RefSeq" id="NP_042555.1">
    <property type="nucleotide sequence ID" value="NC_001637.1"/>
</dbReference>
<dbReference type="SMR" id="P46760"/>
<dbReference type="GeneID" id="1734052"/>
<dbReference type="GO" id="GO:0005739">
    <property type="term" value="C:mitochondrion"/>
    <property type="evidence" value="ECO:0007669"/>
    <property type="project" value="UniProtKB-SubCell"/>
</dbReference>
<dbReference type="GO" id="GO:1990904">
    <property type="term" value="C:ribonucleoprotein complex"/>
    <property type="evidence" value="ECO:0007669"/>
    <property type="project" value="UniProtKB-KW"/>
</dbReference>
<dbReference type="GO" id="GO:0005840">
    <property type="term" value="C:ribosome"/>
    <property type="evidence" value="ECO:0007669"/>
    <property type="project" value="UniProtKB-KW"/>
</dbReference>
<dbReference type="GO" id="GO:0019843">
    <property type="term" value="F:rRNA binding"/>
    <property type="evidence" value="ECO:0007669"/>
    <property type="project" value="UniProtKB-KW"/>
</dbReference>
<dbReference type="GO" id="GO:0003735">
    <property type="term" value="F:structural constituent of ribosome"/>
    <property type="evidence" value="ECO:0007669"/>
    <property type="project" value="InterPro"/>
</dbReference>
<dbReference type="GO" id="GO:0006412">
    <property type="term" value="P:translation"/>
    <property type="evidence" value="ECO:0007669"/>
    <property type="project" value="InterPro"/>
</dbReference>
<dbReference type="Gene3D" id="4.10.910.10">
    <property type="entry name" value="30s ribosomal protein s13, domain 2"/>
    <property type="match status" value="1"/>
</dbReference>
<dbReference type="InterPro" id="IPR027437">
    <property type="entry name" value="Rbsml_uS13_C"/>
</dbReference>
<dbReference type="InterPro" id="IPR001892">
    <property type="entry name" value="Ribosomal_uS13"/>
</dbReference>
<dbReference type="InterPro" id="IPR010979">
    <property type="entry name" value="Ribosomal_uS13-like_H2TH"/>
</dbReference>
<dbReference type="InterPro" id="IPR018269">
    <property type="entry name" value="Ribosomal_uS13_CS"/>
</dbReference>
<dbReference type="Pfam" id="PF00416">
    <property type="entry name" value="Ribosomal_S13"/>
    <property type="match status" value="1"/>
</dbReference>
<dbReference type="PIRSF" id="PIRSF002134">
    <property type="entry name" value="Ribosomal_S13"/>
    <property type="match status" value="1"/>
</dbReference>
<dbReference type="SUPFAM" id="SSF46946">
    <property type="entry name" value="S13-like H2TH domain"/>
    <property type="match status" value="1"/>
</dbReference>
<dbReference type="PROSITE" id="PS00646">
    <property type="entry name" value="RIBOSOMAL_S13_1"/>
    <property type="match status" value="1"/>
</dbReference>
<dbReference type="PROSITE" id="PS50159">
    <property type="entry name" value="RIBOSOMAL_S13_2"/>
    <property type="match status" value="1"/>
</dbReference>
<proteinExistence type="inferred from homology"/>
<protein>
    <recommendedName>
        <fullName evidence="2">Small ribosomal subunit protein uS13m</fullName>
    </recommendedName>
    <alternativeName>
        <fullName>Ribosomal protein S13, mitochondrial</fullName>
    </alternativeName>
</protein>
<name>RT13_ACACA</name>
<organism>
    <name type="scientific">Acanthamoeba castellanii</name>
    <name type="common">Amoeba</name>
    <dbReference type="NCBI Taxonomy" id="5755"/>
    <lineage>
        <taxon>Eukaryota</taxon>
        <taxon>Amoebozoa</taxon>
        <taxon>Discosea</taxon>
        <taxon>Longamoebia</taxon>
        <taxon>Centramoebida</taxon>
        <taxon>Acanthamoebidae</taxon>
        <taxon>Acanthamoeba</taxon>
    </lineage>
</organism>
<gene>
    <name type="primary">RPS13</name>
</gene>
<feature type="chain" id="PRO_0000132209" description="Small ribosomal subunit protein uS13m">
    <location>
        <begin position="1"/>
        <end position="119"/>
    </location>
</feature>
<accession>P46760</accession>
<comment type="function">
    <text evidence="1">Located at the top of the head of the small subunit, it contacts several helices of the small subunit rRNA.</text>
</comment>
<comment type="subunit">
    <text>Part of the small ribosomal subunit.</text>
</comment>
<comment type="subcellular location">
    <subcellularLocation>
        <location>Mitochondrion</location>
    </subcellularLocation>
</comment>
<comment type="similarity">
    <text evidence="2">Belongs to the universal ribosomal protein uS13 family.</text>
</comment>
<keyword id="KW-0496">Mitochondrion</keyword>
<keyword id="KW-0687">Ribonucleoprotein</keyword>
<keyword id="KW-0689">Ribosomal protein</keyword>
<keyword id="KW-0694">RNA-binding</keyword>
<keyword id="KW-0699">rRNA-binding</keyword>
<evidence type="ECO:0000250" key="1"/>
<evidence type="ECO:0000305" key="2"/>
<sequence length="119" mass="13933">MKKLQNFNTFVSDNKNKNIFSALKDIHGVNLKKINKMGLVMGLDKFEKVSSMNFELFSLIKKQAIFFYNLEENKIFNNVNKKKKIKNYTGMRHILKLPVRGQRTHTNAKTPSKNIKKEL</sequence>
<geneLocation type="mitochondrion"/>
<reference key="1">
    <citation type="journal article" date="1995" name="J. Mol. Biol.">
        <title>The mitochondrial DNA of the amoeboid protozoon, Acanthamoeba castellanii: complete sequence, gene content and genome organization.</title>
        <authorList>
            <person name="Burger G."/>
            <person name="Plante I."/>
            <person name="Lonergan K.M."/>
            <person name="Gray M.W."/>
        </authorList>
    </citation>
    <scope>NUCLEOTIDE SEQUENCE [GENOMIC DNA]</scope>
    <source>
        <strain>ATCC 30010 / Neff</strain>
    </source>
</reference>